<feature type="chain" id="PRO_1000007435" description="Large ribosomal subunit protein uL29">
    <location>
        <begin position="1"/>
        <end position="64"/>
    </location>
</feature>
<comment type="similarity">
    <text evidence="1">Belongs to the universal ribosomal protein uL29 family.</text>
</comment>
<organism>
    <name type="scientific">Burkholderia mallei (strain NCTC 10247)</name>
    <dbReference type="NCBI Taxonomy" id="320389"/>
    <lineage>
        <taxon>Bacteria</taxon>
        <taxon>Pseudomonadati</taxon>
        <taxon>Pseudomonadota</taxon>
        <taxon>Betaproteobacteria</taxon>
        <taxon>Burkholderiales</taxon>
        <taxon>Burkholderiaceae</taxon>
        <taxon>Burkholderia</taxon>
        <taxon>pseudomallei group</taxon>
    </lineage>
</organism>
<protein>
    <recommendedName>
        <fullName evidence="1">Large ribosomal subunit protein uL29</fullName>
    </recommendedName>
    <alternativeName>
        <fullName evidence="2">50S ribosomal protein L29</fullName>
    </alternativeName>
</protein>
<reference key="1">
    <citation type="journal article" date="2010" name="Genome Biol. Evol.">
        <title>Continuing evolution of Burkholderia mallei through genome reduction and large-scale rearrangements.</title>
        <authorList>
            <person name="Losada L."/>
            <person name="Ronning C.M."/>
            <person name="DeShazer D."/>
            <person name="Woods D."/>
            <person name="Fedorova N."/>
            <person name="Kim H.S."/>
            <person name="Shabalina S.A."/>
            <person name="Pearson T.R."/>
            <person name="Brinkac L."/>
            <person name="Tan P."/>
            <person name="Nandi T."/>
            <person name="Crabtree J."/>
            <person name="Badger J."/>
            <person name="Beckstrom-Sternberg S."/>
            <person name="Saqib M."/>
            <person name="Schutzer S.E."/>
            <person name="Keim P."/>
            <person name="Nierman W.C."/>
        </authorList>
    </citation>
    <scope>NUCLEOTIDE SEQUENCE [LARGE SCALE GENOMIC DNA]</scope>
    <source>
        <strain>NCTC 10247</strain>
    </source>
</reference>
<proteinExistence type="inferred from homology"/>
<gene>
    <name evidence="1" type="primary">rpmC</name>
    <name type="ordered locus">BMA10247_3486</name>
</gene>
<name>RL29_BURM7</name>
<keyword id="KW-0687">Ribonucleoprotein</keyword>
<keyword id="KW-0689">Ribosomal protein</keyword>
<dbReference type="EMBL" id="CP000548">
    <property type="protein sequence ID" value="ABO05878.1"/>
    <property type="molecule type" value="Genomic_DNA"/>
</dbReference>
<dbReference type="RefSeq" id="WP_004199856.1">
    <property type="nucleotide sequence ID" value="NZ_CP007802.1"/>
</dbReference>
<dbReference type="SMR" id="A3MRW2"/>
<dbReference type="GeneID" id="93061824"/>
<dbReference type="KEGG" id="bmaz:BM44_3033"/>
<dbReference type="KEGG" id="bmn:BMA10247_3486"/>
<dbReference type="PATRIC" id="fig|320389.8.peg.3405"/>
<dbReference type="GO" id="GO:0022625">
    <property type="term" value="C:cytosolic large ribosomal subunit"/>
    <property type="evidence" value="ECO:0007669"/>
    <property type="project" value="TreeGrafter"/>
</dbReference>
<dbReference type="GO" id="GO:0003735">
    <property type="term" value="F:structural constituent of ribosome"/>
    <property type="evidence" value="ECO:0007669"/>
    <property type="project" value="InterPro"/>
</dbReference>
<dbReference type="GO" id="GO:0006412">
    <property type="term" value="P:translation"/>
    <property type="evidence" value="ECO:0007669"/>
    <property type="project" value="UniProtKB-UniRule"/>
</dbReference>
<dbReference type="CDD" id="cd00427">
    <property type="entry name" value="Ribosomal_L29_HIP"/>
    <property type="match status" value="1"/>
</dbReference>
<dbReference type="Gene3D" id="6.10.140.1970">
    <property type="match status" value="1"/>
</dbReference>
<dbReference type="HAMAP" id="MF_00374">
    <property type="entry name" value="Ribosomal_uL29"/>
    <property type="match status" value="1"/>
</dbReference>
<dbReference type="InterPro" id="IPR050063">
    <property type="entry name" value="Ribosomal_protein_uL29"/>
</dbReference>
<dbReference type="InterPro" id="IPR001854">
    <property type="entry name" value="Ribosomal_uL29"/>
</dbReference>
<dbReference type="InterPro" id="IPR018254">
    <property type="entry name" value="Ribosomal_uL29_CS"/>
</dbReference>
<dbReference type="InterPro" id="IPR036049">
    <property type="entry name" value="Ribosomal_uL29_sf"/>
</dbReference>
<dbReference type="NCBIfam" id="TIGR00012">
    <property type="entry name" value="L29"/>
    <property type="match status" value="1"/>
</dbReference>
<dbReference type="PANTHER" id="PTHR10916">
    <property type="entry name" value="60S RIBOSOMAL PROTEIN L35/50S RIBOSOMAL PROTEIN L29"/>
    <property type="match status" value="1"/>
</dbReference>
<dbReference type="PANTHER" id="PTHR10916:SF0">
    <property type="entry name" value="LARGE RIBOSOMAL SUBUNIT PROTEIN UL29C"/>
    <property type="match status" value="1"/>
</dbReference>
<dbReference type="Pfam" id="PF00831">
    <property type="entry name" value="Ribosomal_L29"/>
    <property type="match status" value="1"/>
</dbReference>
<dbReference type="SUPFAM" id="SSF46561">
    <property type="entry name" value="Ribosomal protein L29 (L29p)"/>
    <property type="match status" value="1"/>
</dbReference>
<dbReference type="PROSITE" id="PS00579">
    <property type="entry name" value="RIBOSOMAL_L29"/>
    <property type="match status" value="1"/>
</dbReference>
<evidence type="ECO:0000255" key="1">
    <source>
        <dbReference type="HAMAP-Rule" id="MF_00374"/>
    </source>
</evidence>
<evidence type="ECO:0000305" key="2"/>
<sequence>MKASELLQKDQAALNKELSDLLKAQFGLRMQLATQQLTNTSQLKKVRRDIARVRTVLTQKANQK</sequence>
<accession>A3MRW2</accession>